<dbReference type="EMBL" id="CP000026">
    <property type="protein sequence ID" value="AAV76962.1"/>
    <property type="molecule type" value="Genomic_DNA"/>
</dbReference>
<dbReference type="RefSeq" id="WP_001042123.1">
    <property type="nucleotide sequence ID" value="NC_006511.1"/>
</dbReference>
<dbReference type="SMR" id="Q5PI99"/>
<dbReference type="KEGG" id="spt:SPA0988"/>
<dbReference type="HOGENOM" id="CLU_161319_1_0_6"/>
<dbReference type="Proteomes" id="UP000008185">
    <property type="component" value="Chromosome"/>
</dbReference>
<dbReference type="GO" id="GO:0005576">
    <property type="term" value="C:extracellular region"/>
    <property type="evidence" value="ECO:0007669"/>
    <property type="project" value="UniProtKB-SubCell"/>
</dbReference>
<dbReference type="Gene3D" id="3.10.450.300">
    <property type="entry name" value="YebF/Colicin-M immunity protein"/>
    <property type="match status" value="1"/>
</dbReference>
<dbReference type="HAMAP" id="MF_01435">
    <property type="entry name" value="YebF"/>
    <property type="match status" value="1"/>
</dbReference>
<dbReference type="InterPro" id="IPR020236">
    <property type="entry name" value="Uncharacterised_YebF"/>
</dbReference>
<dbReference type="InterPro" id="IPR038703">
    <property type="entry name" value="YebF/Cmi_sf"/>
</dbReference>
<dbReference type="InterPro" id="IPR025603">
    <property type="entry name" value="YebF/ColM_immunity"/>
</dbReference>
<dbReference type="NCBIfam" id="NF010224">
    <property type="entry name" value="PRK13680.1"/>
    <property type="match status" value="1"/>
</dbReference>
<dbReference type="NCBIfam" id="NF041240">
    <property type="entry name" value="YebF_not_Cmi"/>
    <property type="match status" value="1"/>
</dbReference>
<dbReference type="Pfam" id="PF13995">
    <property type="entry name" value="YebF"/>
    <property type="match status" value="1"/>
</dbReference>
<dbReference type="PROSITE" id="PS51979">
    <property type="entry name" value="YEBF_CMI"/>
    <property type="match status" value="1"/>
</dbReference>
<reference key="1">
    <citation type="journal article" date="2004" name="Nat. Genet.">
        <title>Comparison of genome degradation in Paratyphi A and Typhi, human-restricted serovars of Salmonella enterica that cause typhoid.</title>
        <authorList>
            <person name="McClelland M."/>
            <person name="Sanderson K.E."/>
            <person name="Clifton S.W."/>
            <person name="Latreille P."/>
            <person name="Porwollik S."/>
            <person name="Sabo A."/>
            <person name="Meyer R."/>
            <person name="Bieri T."/>
            <person name="Ozersky P."/>
            <person name="McLellan M."/>
            <person name="Harkins C.R."/>
            <person name="Wang C."/>
            <person name="Nguyen C."/>
            <person name="Berghoff A."/>
            <person name="Elliott G."/>
            <person name="Kohlberg S."/>
            <person name="Strong C."/>
            <person name="Du F."/>
            <person name="Carter J."/>
            <person name="Kremizki C."/>
            <person name="Layman D."/>
            <person name="Leonard S."/>
            <person name="Sun H."/>
            <person name="Fulton L."/>
            <person name="Nash W."/>
            <person name="Miner T."/>
            <person name="Minx P."/>
            <person name="Delehaunty K."/>
            <person name="Fronick C."/>
            <person name="Magrini V."/>
            <person name="Nhan M."/>
            <person name="Warren W."/>
            <person name="Florea L."/>
            <person name="Spieth J."/>
            <person name="Wilson R.K."/>
        </authorList>
    </citation>
    <scope>NUCLEOTIDE SEQUENCE [LARGE SCALE GENOMIC DNA]</scope>
    <source>
        <strain>ATCC 9150 / SARB42</strain>
    </source>
</reference>
<gene>
    <name evidence="1" type="primary">yebF</name>
    <name type="ordered locus">SPA0988</name>
</gene>
<organism>
    <name type="scientific">Salmonella paratyphi A (strain ATCC 9150 / SARB42)</name>
    <dbReference type="NCBI Taxonomy" id="295319"/>
    <lineage>
        <taxon>Bacteria</taxon>
        <taxon>Pseudomonadati</taxon>
        <taxon>Pseudomonadota</taxon>
        <taxon>Gammaproteobacteria</taxon>
        <taxon>Enterobacterales</taxon>
        <taxon>Enterobacteriaceae</taxon>
        <taxon>Salmonella</taxon>
    </lineage>
</organism>
<protein>
    <recommendedName>
        <fullName evidence="1">Protein YebF</fullName>
    </recommendedName>
</protein>
<comment type="subcellular location">
    <subcellularLocation>
        <location evidence="1">Secreted</location>
    </subcellularLocation>
</comment>
<comment type="similarity">
    <text evidence="1">Belongs to the YebF family.</text>
</comment>
<keyword id="KW-1015">Disulfide bond</keyword>
<keyword id="KW-0964">Secreted</keyword>
<keyword id="KW-0732">Signal</keyword>
<name>YEBF_SALPA</name>
<proteinExistence type="inferred from homology"/>
<accession>Q5PI99</accession>
<evidence type="ECO:0000255" key="1">
    <source>
        <dbReference type="HAMAP-Rule" id="MF_01435"/>
    </source>
</evidence>
<evidence type="ECO:0000255" key="2">
    <source>
        <dbReference type="PROSITE-ProRule" id="PRU01323"/>
    </source>
</evidence>
<feature type="signal peptide" evidence="1">
    <location>
        <begin position="1"/>
        <end position="21"/>
    </location>
</feature>
<feature type="chain" id="PRO_0000045951" description="Protein YebF">
    <location>
        <begin position="22"/>
        <end position="117"/>
    </location>
</feature>
<feature type="domain" description="YebF/Cmi" evidence="2">
    <location>
        <begin position="30"/>
        <end position="117"/>
    </location>
</feature>
<feature type="disulfide bond" evidence="2">
    <location>
        <begin position="34"/>
        <end position="107"/>
    </location>
</feature>
<sequence length="117" mass="12774">MNKRGALLSLLLLSASVSAFAASTESKSVKFPQCEGLDAAGIAASVKRDYQQNRIVRWADDQKKVGQADPVAWVNVQDVVGQNDKWTVPLTVRGKSADIHYQVIVDCKAGKAEYKPR</sequence>